<protein>
    <recommendedName>
        <fullName evidence="1">Imidazole glycerol phosphate synthase subunit HisF</fullName>
        <ecNumber evidence="1">4.3.2.10</ecNumber>
    </recommendedName>
    <alternativeName>
        <fullName evidence="1">IGP synthase cyclase subunit</fullName>
    </alternativeName>
    <alternativeName>
        <fullName evidence="1">IGP synthase subunit HisF</fullName>
    </alternativeName>
    <alternativeName>
        <fullName evidence="1">ImGP synthase subunit HisF</fullName>
        <shortName evidence="1">IGPS subunit HisF</shortName>
    </alternativeName>
</protein>
<sequence length="259" mass="27585">MLSKRIIPCLDVRDGRLTKGIKFQGNVDIGDPVESARRYYEQGADEIVFYDITASHEGRGIFLDIVEKVASSIFIPFSVGGGINTVDDMRDALNAGAEKVSVNSGAVKDPDIISKGAARFGSQAIVLGMDVKRVAPTEAIPSGYEIVIHGGRKHMGMDALDWAKTAEVLGAGEICVNSIDADGTKDGYELTLTRMISDAVQIPVIASGGAGHPAHMYDALTKGGASAALIASIVHYGEYTIPDLKKQIQAMGCKMRLTW</sequence>
<keyword id="KW-0028">Amino-acid biosynthesis</keyword>
<keyword id="KW-0963">Cytoplasm</keyword>
<keyword id="KW-0368">Histidine biosynthesis</keyword>
<keyword id="KW-0456">Lyase</keyword>
<keyword id="KW-1185">Reference proteome</keyword>
<accession>Q316L4</accession>
<organism>
    <name type="scientific">Oleidesulfovibrio alaskensis (strain ATCC BAA-1058 / DSM 17464 / G20)</name>
    <name type="common">Desulfovibrio alaskensis</name>
    <dbReference type="NCBI Taxonomy" id="207559"/>
    <lineage>
        <taxon>Bacteria</taxon>
        <taxon>Pseudomonadati</taxon>
        <taxon>Thermodesulfobacteriota</taxon>
        <taxon>Desulfovibrionia</taxon>
        <taxon>Desulfovibrionales</taxon>
        <taxon>Desulfovibrionaceae</taxon>
        <taxon>Oleidesulfovibrio</taxon>
    </lineage>
</organism>
<feature type="chain" id="PRO_0000230127" description="Imidazole glycerol phosphate synthase subunit HisF">
    <location>
        <begin position="1"/>
        <end position="259"/>
    </location>
</feature>
<feature type="active site" evidence="1">
    <location>
        <position position="11"/>
    </location>
</feature>
<feature type="active site" evidence="1">
    <location>
        <position position="130"/>
    </location>
</feature>
<proteinExistence type="inferred from homology"/>
<comment type="function">
    <text evidence="1">IGPS catalyzes the conversion of PRFAR and glutamine to IGP, AICAR and glutamate. The HisF subunit catalyzes the cyclization activity that produces IGP and AICAR from PRFAR using the ammonia provided by the HisH subunit.</text>
</comment>
<comment type="catalytic activity">
    <reaction evidence="1">
        <text>5-[(5-phospho-1-deoxy-D-ribulos-1-ylimino)methylamino]-1-(5-phospho-beta-D-ribosyl)imidazole-4-carboxamide + L-glutamine = D-erythro-1-(imidazol-4-yl)glycerol 3-phosphate + 5-amino-1-(5-phospho-beta-D-ribosyl)imidazole-4-carboxamide + L-glutamate + H(+)</text>
        <dbReference type="Rhea" id="RHEA:24793"/>
        <dbReference type="ChEBI" id="CHEBI:15378"/>
        <dbReference type="ChEBI" id="CHEBI:29985"/>
        <dbReference type="ChEBI" id="CHEBI:58278"/>
        <dbReference type="ChEBI" id="CHEBI:58359"/>
        <dbReference type="ChEBI" id="CHEBI:58475"/>
        <dbReference type="ChEBI" id="CHEBI:58525"/>
        <dbReference type="EC" id="4.3.2.10"/>
    </reaction>
</comment>
<comment type="pathway">
    <text evidence="1">Amino-acid biosynthesis; L-histidine biosynthesis; L-histidine from 5-phospho-alpha-D-ribose 1-diphosphate: step 5/9.</text>
</comment>
<comment type="subunit">
    <text evidence="1">Heterodimer of HisH and HisF.</text>
</comment>
<comment type="subcellular location">
    <subcellularLocation>
        <location evidence="1">Cytoplasm</location>
    </subcellularLocation>
</comment>
<comment type="similarity">
    <text evidence="1">Belongs to the HisA/HisF family.</text>
</comment>
<reference key="1">
    <citation type="journal article" date="2011" name="J. Bacteriol.">
        <title>Complete genome sequence and updated annotation of Desulfovibrio alaskensis G20.</title>
        <authorList>
            <person name="Hauser L.J."/>
            <person name="Land M.L."/>
            <person name="Brown S.D."/>
            <person name="Larimer F."/>
            <person name="Keller K.L."/>
            <person name="Rapp-Giles B.J."/>
            <person name="Price M.N."/>
            <person name="Lin M."/>
            <person name="Bruce D.C."/>
            <person name="Detter J.C."/>
            <person name="Tapia R."/>
            <person name="Han C.S."/>
            <person name="Goodwin L.A."/>
            <person name="Cheng J.F."/>
            <person name="Pitluck S."/>
            <person name="Copeland A."/>
            <person name="Lucas S."/>
            <person name="Nolan M."/>
            <person name="Lapidus A.L."/>
            <person name="Palumbo A.V."/>
            <person name="Wall J.D."/>
        </authorList>
    </citation>
    <scope>NUCLEOTIDE SEQUENCE [LARGE SCALE GENOMIC DNA]</scope>
    <source>
        <strain>ATCC BAA-1058 / DSM 17464 / G20</strain>
    </source>
</reference>
<gene>
    <name evidence="1" type="primary">hisF</name>
    <name type="ordered locus">Dde_0331</name>
</gene>
<evidence type="ECO:0000255" key="1">
    <source>
        <dbReference type="HAMAP-Rule" id="MF_01013"/>
    </source>
</evidence>
<name>HIS6_OLEA2</name>
<dbReference type="EC" id="4.3.2.10" evidence="1"/>
<dbReference type="EMBL" id="CP000112">
    <property type="protein sequence ID" value="ABB37132.1"/>
    <property type="molecule type" value="Genomic_DNA"/>
</dbReference>
<dbReference type="RefSeq" id="WP_011366472.1">
    <property type="nucleotide sequence ID" value="NC_007519.1"/>
</dbReference>
<dbReference type="SMR" id="Q316L4"/>
<dbReference type="STRING" id="207559.Dde_0331"/>
<dbReference type="KEGG" id="dde:Dde_0331"/>
<dbReference type="eggNOG" id="COG0107">
    <property type="taxonomic scope" value="Bacteria"/>
</dbReference>
<dbReference type="HOGENOM" id="CLU_048577_4_0_7"/>
<dbReference type="UniPathway" id="UPA00031">
    <property type="reaction ID" value="UER00010"/>
</dbReference>
<dbReference type="Proteomes" id="UP000002710">
    <property type="component" value="Chromosome"/>
</dbReference>
<dbReference type="GO" id="GO:0005737">
    <property type="term" value="C:cytoplasm"/>
    <property type="evidence" value="ECO:0007669"/>
    <property type="project" value="UniProtKB-SubCell"/>
</dbReference>
<dbReference type="GO" id="GO:0000107">
    <property type="term" value="F:imidazoleglycerol-phosphate synthase activity"/>
    <property type="evidence" value="ECO:0007669"/>
    <property type="project" value="UniProtKB-UniRule"/>
</dbReference>
<dbReference type="GO" id="GO:0016829">
    <property type="term" value="F:lyase activity"/>
    <property type="evidence" value="ECO:0007669"/>
    <property type="project" value="UniProtKB-KW"/>
</dbReference>
<dbReference type="GO" id="GO:0000105">
    <property type="term" value="P:L-histidine biosynthetic process"/>
    <property type="evidence" value="ECO:0007669"/>
    <property type="project" value="UniProtKB-UniRule"/>
</dbReference>
<dbReference type="CDD" id="cd04731">
    <property type="entry name" value="HisF"/>
    <property type="match status" value="1"/>
</dbReference>
<dbReference type="Gene3D" id="3.20.20.70">
    <property type="entry name" value="Aldolase class I"/>
    <property type="match status" value="1"/>
</dbReference>
<dbReference type="HAMAP" id="MF_01013">
    <property type="entry name" value="HisF"/>
    <property type="match status" value="1"/>
</dbReference>
<dbReference type="InterPro" id="IPR013785">
    <property type="entry name" value="Aldolase_TIM"/>
</dbReference>
<dbReference type="InterPro" id="IPR006062">
    <property type="entry name" value="His_biosynth"/>
</dbReference>
<dbReference type="InterPro" id="IPR004651">
    <property type="entry name" value="HisF"/>
</dbReference>
<dbReference type="InterPro" id="IPR050064">
    <property type="entry name" value="IGPS_HisA/HisF"/>
</dbReference>
<dbReference type="InterPro" id="IPR011060">
    <property type="entry name" value="RibuloseP-bd_barrel"/>
</dbReference>
<dbReference type="NCBIfam" id="TIGR00735">
    <property type="entry name" value="hisF"/>
    <property type="match status" value="1"/>
</dbReference>
<dbReference type="PANTHER" id="PTHR21235:SF2">
    <property type="entry name" value="IMIDAZOLE GLYCEROL PHOSPHATE SYNTHASE HISHF"/>
    <property type="match status" value="1"/>
</dbReference>
<dbReference type="PANTHER" id="PTHR21235">
    <property type="entry name" value="IMIDAZOLE GLYCEROL PHOSPHATE SYNTHASE SUBUNIT HISF/H IGP SYNTHASE SUBUNIT HISF/H"/>
    <property type="match status" value="1"/>
</dbReference>
<dbReference type="Pfam" id="PF00977">
    <property type="entry name" value="His_biosynth"/>
    <property type="match status" value="1"/>
</dbReference>
<dbReference type="SUPFAM" id="SSF51366">
    <property type="entry name" value="Ribulose-phoshate binding barrel"/>
    <property type="match status" value="1"/>
</dbReference>